<organism>
    <name type="scientific">Clostridium perfringens (strain ATCC 13124 / DSM 756 / JCM 1290 / NCIMB 6125 / NCTC 8237 / Type A)</name>
    <dbReference type="NCBI Taxonomy" id="195103"/>
    <lineage>
        <taxon>Bacteria</taxon>
        <taxon>Bacillati</taxon>
        <taxon>Bacillota</taxon>
        <taxon>Clostridia</taxon>
        <taxon>Eubacteriales</taxon>
        <taxon>Clostridiaceae</taxon>
        <taxon>Clostridium</taxon>
    </lineage>
</organism>
<proteinExistence type="inferred from homology"/>
<dbReference type="EC" id="2.7.7.-" evidence="1"/>
<dbReference type="EC" id="2.7.7.108" evidence="1"/>
<dbReference type="EMBL" id="CP000246">
    <property type="protein sequence ID" value="ABG83440.1"/>
    <property type="molecule type" value="Genomic_DNA"/>
</dbReference>
<dbReference type="RefSeq" id="WP_011590040.1">
    <property type="nucleotide sequence ID" value="NC_008261.1"/>
</dbReference>
<dbReference type="SMR" id="Q0TV32"/>
<dbReference type="PaxDb" id="195103-CPF_0041"/>
<dbReference type="KEGG" id="cpf:CPF_0041"/>
<dbReference type="eggNOG" id="COG0397">
    <property type="taxonomic scope" value="Bacteria"/>
</dbReference>
<dbReference type="HOGENOM" id="CLU_010245_4_1_9"/>
<dbReference type="Proteomes" id="UP000001823">
    <property type="component" value="Chromosome"/>
</dbReference>
<dbReference type="GO" id="GO:0070733">
    <property type="term" value="F:AMPylase activity"/>
    <property type="evidence" value="ECO:0007669"/>
    <property type="project" value="RHEA"/>
</dbReference>
<dbReference type="GO" id="GO:0005524">
    <property type="term" value="F:ATP binding"/>
    <property type="evidence" value="ECO:0007669"/>
    <property type="project" value="UniProtKB-UniRule"/>
</dbReference>
<dbReference type="GO" id="GO:0000287">
    <property type="term" value="F:magnesium ion binding"/>
    <property type="evidence" value="ECO:0007669"/>
    <property type="project" value="UniProtKB-UniRule"/>
</dbReference>
<dbReference type="HAMAP" id="MF_00692">
    <property type="entry name" value="YdiU_SelO"/>
    <property type="match status" value="1"/>
</dbReference>
<dbReference type="InterPro" id="IPR003846">
    <property type="entry name" value="SelO"/>
</dbReference>
<dbReference type="NCBIfam" id="NF000658">
    <property type="entry name" value="PRK00029.1"/>
    <property type="match status" value="1"/>
</dbReference>
<dbReference type="PANTHER" id="PTHR12153:SF15">
    <property type="entry name" value="PROTEIN ADENYLYLTRANSFERASE SELO, MITOCHONDRIAL"/>
    <property type="match status" value="1"/>
</dbReference>
<dbReference type="PANTHER" id="PTHR12153">
    <property type="entry name" value="SELENOPROTEIN O"/>
    <property type="match status" value="1"/>
</dbReference>
<dbReference type="Pfam" id="PF02696">
    <property type="entry name" value="SelO"/>
    <property type="match status" value="1"/>
</dbReference>
<sequence>MDNKNFQSKTGFNLENTYLTLPNIFFSEQNPKGSKNPKLIKFNTSLAEELGLNEEVLNSDFGLNIFAGNETFPGIVPIAQAYAGHQFGHFTMLGDGRALLLGEHVTKDSKRYDVQLKGSGRTIYSRGGDGKAALAPMLREYIISEGMHGLGIPTTRSLAVVNTGEEVLRERFEQGAILTRIASSHIRVGTFAYAAQWGTLEDLKSLADYTIKRHFPNIAKSENKYILFLEEVINRQAELIVKWQSVGFIHGVMNTDNMVISGETIDYGPCAFMDTYDTNTVFSSIDYAGRYAYGNQPNMALWNLARFSEALLPLLNPNLDEAVNIAKKSISNFSKLYKKYWFNKMRAKLGLFTEKENDELLIEGLLSTMQKYEADFTNTFVSLTLNKFEDEKVFSSDEFKTWYALWQNRLKEENRSQEEVRNLMMNNNPYIIPRNHLVEKALKNAEKGDFTFMDNLLEALKNPYSYSKDLEKYTKLPEKSDTPYVTYCGT</sequence>
<evidence type="ECO:0000255" key="1">
    <source>
        <dbReference type="HAMAP-Rule" id="MF_00692"/>
    </source>
</evidence>
<keyword id="KW-0067">ATP-binding</keyword>
<keyword id="KW-0460">Magnesium</keyword>
<keyword id="KW-0464">Manganese</keyword>
<keyword id="KW-0479">Metal-binding</keyword>
<keyword id="KW-0547">Nucleotide-binding</keyword>
<keyword id="KW-0548">Nucleotidyltransferase</keyword>
<keyword id="KW-0808">Transferase</keyword>
<reference key="1">
    <citation type="journal article" date="2006" name="Genome Res.">
        <title>Skewed genomic variability in strains of the toxigenic bacterial pathogen, Clostridium perfringens.</title>
        <authorList>
            <person name="Myers G.S.A."/>
            <person name="Rasko D.A."/>
            <person name="Cheung J.K."/>
            <person name="Ravel J."/>
            <person name="Seshadri R."/>
            <person name="DeBoy R.T."/>
            <person name="Ren Q."/>
            <person name="Varga J."/>
            <person name="Awad M.M."/>
            <person name="Brinkac L.M."/>
            <person name="Daugherty S.C."/>
            <person name="Haft D.H."/>
            <person name="Dodson R.J."/>
            <person name="Madupu R."/>
            <person name="Nelson W.C."/>
            <person name="Rosovitz M.J."/>
            <person name="Sullivan S.A."/>
            <person name="Khouri H."/>
            <person name="Dimitrov G.I."/>
            <person name="Watkins K.L."/>
            <person name="Mulligan S."/>
            <person name="Benton J."/>
            <person name="Radune D."/>
            <person name="Fisher D.J."/>
            <person name="Atkins H.S."/>
            <person name="Hiscox T."/>
            <person name="Jost B.H."/>
            <person name="Billington S.J."/>
            <person name="Songer J.G."/>
            <person name="McClane B.A."/>
            <person name="Titball R.W."/>
            <person name="Rood J.I."/>
            <person name="Melville S.B."/>
            <person name="Paulsen I.T."/>
        </authorList>
    </citation>
    <scope>NUCLEOTIDE SEQUENCE [LARGE SCALE GENOMIC DNA]</scope>
    <source>
        <strain>ATCC 13124 / DSM 756 / JCM 1290 / NCIMB 6125 / NCTC 8237 / S 107 / Type A</strain>
    </source>
</reference>
<feature type="chain" id="PRO_0000271819" description="Protein nucleotidyltransferase YdiU">
    <location>
        <begin position="1"/>
        <end position="490"/>
    </location>
</feature>
<feature type="active site" description="Proton acceptor" evidence="1">
    <location>
        <position position="256"/>
    </location>
</feature>
<feature type="binding site" evidence="1">
    <location>
        <position position="94"/>
    </location>
    <ligand>
        <name>ATP</name>
        <dbReference type="ChEBI" id="CHEBI:30616"/>
    </ligand>
</feature>
<feature type="binding site" evidence="1">
    <location>
        <position position="96"/>
    </location>
    <ligand>
        <name>ATP</name>
        <dbReference type="ChEBI" id="CHEBI:30616"/>
    </ligand>
</feature>
<feature type="binding site" evidence="1">
    <location>
        <position position="97"/>
    </location>
    <ligand>
        <name>ATP</name>
        <dbReference type="ChEBI" id="CHEBI:30616"/>
    </ligand>
</feature>
<feature type="binding site" evidence="1">
    <location>
        <position position="117"/>
    </location>
    <ligand>
        <name>ATP</name>
        <dbReference type="ChEBI" id="CHEBI:30616"/>
    </ligand>
</feature>
<feature type="binding site" evidence="1">
    <location>
        <position position="129"/>
    </location>
    <ligand>
        <name>ATP</name>
        <dbReference type="ChEBI" id="CHEBI:30616"/>
    </ligand>
</feature>
<feature type="binding site" evidence="1">
    <location>
        <position position="130"/>
    </location>
    <ligand>
        <name>ATP</name>
        <dbReference type="ChEBI" id="CHEBI:30616"/>
    </ligand>
</feature>
<feature type="binding site" evidence="1">
    <location>
        <position position="180"/>
    </location>
    <ligand>
        <name>ATP</name>
        <dbReference type="ChEBI" id="CHEBI:30616"/>
    </ligand>
</feature>
<feature type="binding site" evidence="1">
    <location>
        <position position="187"/>
    </location>
    <ligand>
        <name>ATP</name>
        <dbReference type="ChEBI" id="CHEBI:30616"/>
    </ligand>
</feature>
<feature type="binding site" evidence="1">
    <location>
        <position position="257"/>
    </location>
    <ligand>
        <name>Mg(2+)</name>
        <dbReference type="ChEBI" id="CHEBI:18420"/>
    </ligand>
</feature>
<feature type="binding site" evidence="1">
    <location>
        <position position="266"/>
    </location>
    <ligand>
        <name>ATP</name>
        <dbReference type="ChEBI" id="CHEBI:30616"/>
    </ligand>
</feature>
<feature type="binding site" evidence="1">
    <location>
        <position position="266"/>
    </location>
    <ligand>
        <name>Mg(2+)</name>
        <dbReference type="ChEBI" id="CHEBI:18420"/>
    </ligand>
</feature>
<comment type="function">
    <text evidence="1">Nucleotidyltransferase involved in the post-translational modification of proteins. It can catalyze the addition of adenosine monophosphate (AMP) or uridine monophosphate (UMP) to a protein, resulting in modifications known as AMPylation and UMPylation.</text>
</comment>
<comment type="catalytic activity">
    <reaction evidence="1">
        <text>L-seryl-[protein] + ATP = 3-O-(5'-adenylyl)-L-seryl-[protein] + diphosphate</text>
        <dbReference type="Rhea" id="RHEA:58120"/>
        <dbReference type="Rhea" id="RHEA-COMP:9863"/>
        <dbReference type="Rhea" id="RHEA-COMP:15073"/>
        <dbReference type="ChEBI" id="CHEBI:29999"/>
        <dbReference type="ChEBI" id="CHEBI:30616"/>
        <dbReference type="ChEBI" id="CHEBI:33019"/>
        <dbReference type="ChEBI" id="CHEBI:142516"/>
        <dbReference type="EC" id="2.7.7.108"/>
    </reaction>
</comment>
<comment type="catalytic activity">
    <reaction evidence="1">
        <text>L-threonyl-[protein] + ATP = 3-O-(5'-adenylyl)-L-threonyl-[protein] + diphosphate</text>
        <dbReference type="Rhea" id="RHEA:54292"/>
        <dbReference type="Rhea" id="RHEA-COMP:11060"/>
        <dbReference type="Rhea" id="RHEA-COMP:13847"/>
        <dbReference type="ChEBI" id="CHEBI:30013"/>
        <dbReference type="ChEBI" id="CHEBI:30616"/>
        <dbReference type="ChEBI" id="CHEBI:33019"/>
        <dbReference type="ChEBI" id="CHEBI:138113"/>
        <dbReference type="EC" id="2.7.7.108"/>
    </reaction>
</comment>
<comment type="catalytic activity">
    <reaction evidence="1">
        <text>L-tyrosyl-[protein] + ATP = O-(5'-adenylyl)-L-tyrosyl-[protein] + diphosphate</text>
        <dbReference type="Rhea" id="RHEA:54288"/>
        <dbReference type="Rhea" id="RHEA-COMP:10136"/>
        <dbReference type="Rhea" id="RHEA-COMP:13846"/>
        <dbReference type="ChEBI" id="CHEBI:30616"/>
        <dbReference type="ChEBI" id="CHEBI:33019"/>
        <dbReference type="ChEBI" id="CHEBI:46858"/>
        <dbReference type="ChEBI" id="CHEBI:83624"/>
        <dbReference type="EC" id="2.7.7.108"/>
    </reaction>
</comment>
<comment type="catalytic activity">
    <reaction evidence="1">
        <text>L-histidyl-[protein] + UTP = N(tele)-(5'-uridylyl)-L-histidyl-[protein] + diphosphate</text>
        <dbReference type="Rhea" id="RHEA:83891"/>
        <dbReference type="Rhea" id="RHEA-COMP:9745"/>
        <dbReference type="Rhea" id="RHEA-COMP:20239"/>
        <dbReference type="ChEBI" id="CHEBI:29979"/>
        <dbReference type="ChEBI" id="CHEBI:33019"/>
        <dbReference type="ChEBI" id="CHEBI:46398"/>
        <dbReference type="ChEBI" id="CHEBI:233474"/>
    </reaction>
</comment>
<comment type="catalytic activity">
    <reaction evidence="1">
        <text>L-seryl-[protein] + UTP = O-(5'-uridylyl)-L-seryl-[protein] + diphosphate</text>
        <dbReference type="Rhea" id="RHEA:64604"/>
        <dbReference type="Rhea" id="RHEA-COMP:9863"/>
        <dbReference type="Rhea" id="RHEA-COMP:16635"/>
        <dbReference type="ChEBI" id="CHEBI:29999"/>
        <dbReference type="ChEBI" id="CHEBI:33019"/>
        <dbReference type="ChEBI" id="CHEBI:46398"/>
        <dbReference type="ChEBI" id="CHEBI:156051"/>
    </reaction>
</comment>
<comment type="catalytic activity">
    <reaction evidence="1">
        <text>L-tyrosyl-[protein] + UTP = O-(5'-uridylyl)-L-tyrosyl-[protein] + diphosphate</text>
        <dbReference type="Rhea" id="RHEA:83887"/>
        <dbReference type="Rhea" id="RHEA-COMP:10136"/>
        <dbReference type="Rhea" id="RHEA-COMP:20238"/>
        <dbReference type="ChEBI" id="CHEBI:33019"/>
        <dbReference type="ChEBI" id="CHEBI:46398"/>
        <dbReference type="ChEBI" id="CHEBI:46858"/>
        <dbReference type="ChEBI" id="CHEBI:90602"/>
    </reaction>
</comment>
<comment type="cofactor">
    <cofactor evidence="1">
        <name>Mg(2+)</name>
        <dbReference type="ChEBI" id="CHEBI:18420"/>
    </cofactor>
    <cofactor evidence="1">
        <name>Mn(2+)</name>
        <dbReference type="ChEBI" id="CHEBI:29035"/>
    </cofactor>
</comment>
<comment type="similarity">
    <text evidence="1">Belongs to the SELO family.</text>
</comment>
<gene>
    <name evidence="1" type="primary">ydiU</name>
    <name evidence="1" type="synonym">selO</name>
    <name type="ordered locus">CPF_0041</name>
</gene>
<protein>
    <recommendedName>
        <fullName evidence="1">Protein nucleotidyltransferase YdiU</fullName>
        <ecNumber evidence="1">2.7.7.-</ecNumber>
    </recommendedName>
    <alternativeName>
        <fullName evidence="1">Protein adenylyltransferase YdiU</fullName>
        <ecNumber evidence="1">2.7.7.108</ecNumber>
    </alternativeName>
    <alternativeName>
        <fullName evidence="1">Protein uridylyltransferase YdiU</fullName>
        <ecNumber evidence="1">2.7.7.-</ecNumber>
    </alternativeName>
</protein>
<accession>Q0TV32</accession>
<name>SELO_CLOP1</name>